<feature type="chain" id="PRO_1000046024" description="Ribosomal protein L11 methyltransferase">
    <location>
        <begin position="1"/>
        <end position="312"/>
    </location>
</feature>
<feature type="binding site" evidence="1">
    <location>
        <position position="162"/>
    </location>
    <ligand>
        <name>S-adenosyl-L-methionine</name>
        <dbReference type="ChEBI" id="CHEBI:59789"/>
    </ligand>
</feature>
<feature type="binding site" evidence="1">
    <location>
        <position position="183"/>
    </location>
    <ligand>
        <name>S-adenosyl-L-methionine</name>
        <dbReference type="ChEBI" id="CHEBI:59789"/>
    </ligand>
</feature>
<feature type="binding site" evidence="1">
    <location>
        <position position="205"/>
    </location>
    <ligand>
        <name>S-adenosyl-L-methionine</name>
        <dbReference type="ChEBI" id="CHEBI:59789"/>
    </ligand>
</feature>
<feature type="binding site" evidence="1">
    <location>
        <position position="248"/>
    </location>
    <ligand>
        <name>S-adenosyl-L-methionine</name>
        <dbReference type="ChEBI" id="CHEBI:59789"/>
    </ligand>
</feature>
<organism>
    <name type="scientific">Geobacillus kaustophilus (strain HTA426)</name>
    <dbReference type="NCBI Taxonomy" id="235909"/>
    <lineage>
        <taxon>Bacteria</taxon>
        <taxon>Bacillati</taxon>
        <taxon>Bacillota</taxon>
        <taxon>Bacilli</taxon>
        <taxon>Bacillales</taxon>
        <taxon>Anoxybacillaceae</taxon>
        <taxon>Geobacillus</taxon>
        <taxon>Geobacillus thermoleovorans group</taxon>
    </lineage>
</organism>
<accession>Q5KWZ9</accession>
<dbReference type="EC" id="2.1.1.-" evidence="1"/>
<dbReference type="EMBL" id="BA000043">
    <property type="protein sequence ID" value="BAD76787.1"/>
    <property type="molecule type" value="Genomic_DNA"/>
</dbReference>
<dbReference type="RefSeq" id="WP_011231981.1">
    <property type="nucleotide sequence ID" value="NC_006510.1"/>
</dbReference>
<dbReference type="SMR" id="Q5KWZ9"/>
<dbReference type="STRING" id="235909.GK2502"/>
<dbReference type="KEGG" id="gka:GK2502"/>
<dbReference type="PATRIC" id="fig|235909.7.peg.2679"/>
<dbReference type="eggNOG" id="COG2264">
    <property type="taxonomic scope" value="Bacteria"/>
</dbReference>
<dbReference type="HOGENOM" id="CLU_049382_0_1_9"/>
<dbReference type="Proteomes" id="UP000001172">
    <property type="component" value="Chromosome"/>
</dbReference>
<dbReference type="GO" id="GO:0005737">
    <property type="term" value="C:cytoplasm"/>
    <property type="evidence" value="ECO:0007669"/>
    <property type="project" value="UniProtKB-SubCell"/>
</dbReference>
<dbReference type="GO" id="GO:0016279">
    <property type="term" value="F:protein-lysine N-methyltransferase activity"/>
    <property type="evidence" value="ECO:0007669"/>
    <property type="project" value="RHEA"/>
</dbReference>
<dbReference type="GO" id="GO:0032259">
    <property type="term" value="P:methylation"/>
    <property type="evidence" value="ECO:0007669"/>
    <property type="project" value="UniProtKB-KW"/>
</dbReference>
<dbReference type="CDD" id="cd02440">
    <property type="entry name" value="AdoMet_MTases"/>
    <property type="match status" value="1"/>
</dbReference>
<dbReference type="Gene3D" id="3.40.50.150">
    <property type="entry name" value="Vaccinia Virus protein VP39"/>
    <property type="match status" value="1"/>
</dbReference>
<dbReference type="HAMAP" id="MF_00735">
    <property type="entry name" value="Methyltr_PrmA"/>
    <property type="match status" value="1"/>
</dbReference>
<dbReference type="InterPro" id="IPR050078">
    <property type="entry name" value="Ribosomal_L11_MeTrfase_PrmA"/>
</dbReference>
<dbReference type="InterPro" id="IPR004498">
    <property type="entry name" value="Ribosomal_PrmA_MeTrfase"/>
</dbReference>
<dbReference type="InterPro" id="IPR029063">
    <property type="entry name" value="SAM-dependent_MTases_sf"/>
</dbReference>
<dbReference type="NCBIfam" id="TIGR00406">
    <property type="entry name" value="prmA"/>
    <property type="match status" value="1"/>
</dbReference>
<dbReference type="PANTHER" id="PTHR43648">
    <property type="entry name" value="ELECTRON TRANSFER FLAVOPROTEIN BETA SUBUNIT LYSINE METHYLTRANSFERASE"/>
    <property type="match status" value="1"/>
</dbReference>
<dbReference type="PANTHER" id="PTHR43648:SF1">
    <property type="entry name" value="ELECTRON TRANSFER FLAVOPROTEIN BETA SUBUNIT LYSINE METHYLTRANSFERASE"/>
    <property type="match status" value="1"/>
</dbReference>
<dbReference type="Pfam" id="PF06325">
    <property type="entry name" value="PrmA"/>
    <property type="match status" value="1"/>
</dbReference>
<dbReference type="PIRSF" id="PIRSF000401">
    <property type="entry name" value="RPL11_MTase"/>
    <property type="match status" value="1"/>
</dbReference>
<dbReference type="SUPFAM" id="SSF53335">
    <property type="entry name" value="S-adenosyl-L-methionine-dependent methyltransferases"/>
    <property type="match status" value="1"/>
</dbReference>
<protein>
    <recommendedName>
        <fullName evidence="1">Ribosomal protein L11 methyltransferase</fullName>
        <shortName evidence="1">L11 Mtase</shortName>
        <ecNumber evidence="1">2.1.1.-</ecNumber>
    </recommendedName>
</protein>
<proteinExistence type="inferred from homology"/>
<sequence>MKWSEISIHTTHEAVEAISNILHEAGAGGVVIEDPYDLVKERDDWYGEIVELNPDDYPEEGVIIKAYLPVNSFLGETVEQIKQAINNLWLYDIDLGKNKITLSEVNEEEWATAWKKHYHPVKVSEKFTIVPTWETYEPASRDELIIEMDPGMAFGTGTHPTTVMCLQALEKYVRPGDHVIDVGTGSGILSIAAAMLGAQSVRALDLDPVAVDSARLNVKLNKVQHIVTVSQNNLLDHIEEPADVIVANILAEIILRFTGDAYRLLKPGGRFITSGIIQAKKQDVKDGLLAAGFAIEEINVMEDWVAVVALKP</sequence>
<gene>
    <name evidence="1" type="primary">prmA</name>
    <name type="ordered locus">GK2502</name>
</gene>
<reference key="1">
    <citation type="journal article" date="2004" name="Nucleic Acids Res.">
        <title>Thermoadaptation trait revealed by the genome sequence of thermophilic Geobacillus kaustophilus.</title>
        <authorList>
            <person name="Takami H."/>
            <person name="Takaki Y."/>
            <person name="Chee G.-J."/>
            <person name="Nishi S."/>
            <person name="Shimamura S."/>
            <person name="Suzuki H."/>
            <person name="Matsui S."/>
            <person name="Uchiyama I."/>
        </authorList>
    </citation>
    <scope>NUCLEOTIDE SEQUENCE [LARGE SCALE GENOMIC DNA]</scope>
    <source>
        <strain>HTA426</strain>
    </source>
</reference>
<evidence type="ECO:0000255" key="1">
    <source>
        <dbReference type="HAMAP-Rule" id="MF_00735"/>
    </source>
</evidence>
<comment type="function">
    <text evidence="1">Methylates ribosomal protein L11.</text>
</comment>
<comment type="catalytic activity">
    <reaction evidence="1">
        <text>L-lysyl-[protein] + 3 S-adenosyl-L-methionine = N(6),N(6),N(6)-trimethyl-L-lysyl-[protein] + 3 S-adenosyl-L-homocysteine + 3 H(+)</text>
        <dbReference type="Rhea" id="RHEA:54192"/>
        <dbReference type="Rhea" id="RHEA-COMP:9752"/>
        <dbReference type="Rhea" id="RHEA-COMP:13826"/>
        <dbReference type="ChEBI" id="CHEBI:15378"/>
        <dbReference type="ChEBI" id="CHEBI:29969"/>
        <dbReference type="ChEBI" id="CHEBI:57856"/>
        <dbReference type="ChEBI" id="CHEBI:59789"/>
        <dbReference type="ChEBI" id="CHEBI:61961"/>
    </reaction>
</comment>
<comment type="subcellular location">
    <subcellularLocation>
        <location evidence="1">Cytoplasm</location>
    </subcellularLocation>
</comment>
<comment type="similarity">
    <text evidence="1">Belongs to the methyltransferase superfamily. PrmA family.</text>
</comment>
<keyword id="KW-0963">Cytoplasm</keyword>
<keyword id="KW-0489">Methyltransferase</keyword>
<keyword id="KW-1185">Reference proteome</keyword>
<keyword id="KW-0949">S-adenosyl-L-methionine</keyword>
<keyword id="KW-0808">Transferase</keyword>
<name>PRMA_GEOKA</name>